<keyword id="KW-0025">Alternative splicing</keyword>
<keyword id="KW-0040">ANK repeat</keyword>
<keyword id="KW-0963">Cytoplasm</keyword>
<keyword id="KW-1267">Proteomics identification</keyword>
<keyword id="KW-1185">Reference proteome</keyword>
<keyword id="KW-0677">Repeat</keyword>
<keyword id="KW-0832">Ubl conjugation</keyword>
<keyword id="KW-0833">Ubl conjugation pathway</keyword>
<proteinExistence type="evidence at protein level"/>
<name>ASB6_HUMAN</name>
<evidence type="ECO:0000250" key="1"/>
<evidence type="ECO:0000255" key="2">
    <source>
        <dbReference type="PROSITE-ProRule" id="PRU00194"/>
    </source>
</evidence>
<evidence type="ECO:0000269" key="3">
    <source>
    </source>
</evidence>
<evidence type="ECO:0000269" key="4">
    <source>
    </source>
</evidence>
<evidence type="ECO:0000269" key="5">
    <source>
    </source>
</evidence>
<evidence type="ECO:0000303" key="6">
    <source>
    </source>
</evidence>
<evidence type="ECO:0000305" key="7"/>
<accession>Q9NWX5</accession>
<accession>Q5SZB7</accession>
<accession>Q9BV15</accession>
<feature type="chain" id="PRO_0000066933" description="Ankyrin repeat and SOCS box protein 6">
    <location>
        <begin position="1"/>
        <end position="421"/>
    </location>
</feature>
<feature type="repeat" description="ANK 1">
    <location>
        <begin position="67"/>
        <end position="97"/>
    </location>
</feature>
<feature type="repeat" description="ANK 2">
    <location>
        <begin position="102"/>
        <end position="131"/>
    </location>
</feature>
<feature type="repeat" description="ANK 3">
    <location>
        <begin position="136"/>
        <end position="166"/>
    </location>
</feature>
<feature type="repeat" description="ANK 4">
    <location>
        <begin position="170"/>
        <end position="205"/>
    </location>
</feature>
<feature type="repeat" description="ANK 5">
    <location>
        <begin position="226"/>
        <end position="255"/>
    </location>
</feature>
<feature type="repeat" description="ANK 6">
    <location>
        <begin position="260"/>
        <end position="289"/>
    </location>
</feature>
<feature type="domain" description="SOCS box" evidence="2">
    <location>
        <begin position="360"/>
        <end position="415"/>
    </location>
</feature>
<feature type="splice variant" id="VSP_042006" description="In isoform 2." evidence="6">
    <original>IHESSPLDLASEEPERLPCLQRLLDLGADVNAADKHGKTALLHALASSDGVQIHNTENIRLLLEGGADVKATTKDGDTVFTCIIFLLGETVGGDKEEAQMINRFCFQVTRLLLAHGADPSECPAHESLTHICLKSFKLHFPLLRFLLESGAAYNCSLHGASCWSGFHIIFERLCSHPGCTEDESHADLLRKAETVLDLMVTNSQKLQLPENFDIHPVGSLAEKIQALHFSLRQLESYPPPLKHLCRVAIRLYLQPWPVDVKVKALPLPDRLKWYLLSEHSGSVEDDI</original>
    <variation>EKLLCSMLWPAATGCRSTILRTFVSYWKEGQTSRPPPKMGTQCSPASSSCLVRPWEGTKRRPR</variation>
    <location>
        <begin position="135"/>
        <end position="421"/>
    </location>
</feature>
<reference key="1">
    <citation type="journal article" date="2004" name="Nat. Genet.">
        <title>Complete sequencing and characterization of 21,243 full-length human cDNAs.</title>
        <authorList>
            <person name="Ota T."/>
            <person name="Suzuki Y."/>
            <person name="Nishikawa T."/>
            <person name="Otsuki T."/>
            <person name="Sugiyama T."/>
            <person name="Irie R."/>
            <person name="Wakamatsu A."/>
            <person name="Hayashi K."/>
            <person name="Sato H."/>
            <person name="Nagai K."/>
            <person name="Kimura K."/>
            <person name="Makita H."/>
            <person name="Sekine M."/>
            <person name="Obayashi M."/>
            <person name="Nishi T."/>
            <person name="Shibahara T."/>
            <person name="Tanaka T."/>
            <person name="Ishii S."/>
            <person name="Yamamoto J."/>
            <person name="Saito K."/>
            <person name="Kawai Y."/>
            <person name="Isono Y."/>
            <person name="Nakamura Y."/>
            <person name="Nagahari K."/>
            <person name="Murakami K."/>
            <person name="Yasuda T."/>
            <person name="Iwayanagi T."/>
            <person name="Wagatsuma M."/>
            <person name="Shiratori A."/>
            <person name="Sudo H."/>
            <person name="Hosoiri T."/>
            <person name="Kaku Y."/>
            <person name="Kodaira H."/>
            <person name="Kondo H."/>
            <person name="Sugawara M."/>
            <person name="Takahashi M."/>
            <person name="Kanda K."/>
            <person name="Yokoi T."/>
            <person name="Furuya T."/>
            <person name="Kikkawa E."/>
            <person name="Omura Y."/>
            <person name="Abe K."/>
            <person name="Kamihara K."/>
            <person name="Katsuta N."/>
            <person name="Sato K."/>
            <person name="Tanikawa M."/>
            <person name="Yamazaki M."/>
            <person name="Ninomiya K."/>
            <person name="Ishibashi T."/>
            <person name="Yamashita H."/>
            <person name="Murakawa K."/>
            <person name="Fujimori K."/>
            <person name="Tanai H."/>
            <person name="Kimata M."/>
            <person name="Watanabe M."/>
            <person name="Hiraoka S."/>
            <person name="Chiba Y."/>
            <person name="Ishida S."/>
            <person name="Ono Y."/>
            <person name="Takiguchi S."/>
            <person name="Watanabe S."/>
            <person name="Yosida M."/>
            <person name="Hotuta T."/>
            <person name="Kusano J."/>
            <person name="Kanehori K."/>
            <person name="Takahashi-Fujii A."/>
            <person name="Hara H."/>
            <person name="Tanase T.-O."/>
            <person name="Nomura Y."/>
            <person name="Togiya S."/>
            <person name="Komai F."/>
            <person name="Hara R."/>
            <person name="Takeuchi K."/>
            <person name="Arita M."/>
            <person name="Imose N."/>
            <person name="Musashino K."/>
            <person name="Yuuki H."/>
            <person name="Oshima A."/>
            <person name="Sasaki N."/>
            <person name="Aotsuka S."/>
            <person name="Yoshikawa Y."/>
            <person name="Matsunawa H."/>
            <person name="Ichihara T."/>
            <person name="Shiohata N."/>
            <person name="Sano S."/>
            <person name="Moriya S."/>
            <person name="Momiyama H."/>
            <person name="Satoh N."/>
            <person name="Takami S."/>
            <person name="Terashima Y."/>
            <person name="Suzuki O."/>
            <person name="Nakagawa S."/>
            <person name="Senoh A."/>
            <person name="Mizoguchi H."/>
            <person name="Goto Y."/>
            <person name="Shimizu F."/>
            <person name="Wakebe H."/>
            <person name="Hishigaki H."/>
            <person name="Watanabe T."/>
            <person name="Sugiyama A."/>
            <person name="Takemoto M."/>
            <person name="Kawakami B."/>
            <person name="Yamazaki M."/>
            <person name="Watanabe K."/>
            <person name="Kumagai A."/>
            <person name="Itakura S."/>
            <person name="Fukuzumi Y."/>
            <person name="Fujimori Y."/>
            <person name="Komiyama M."/>
            <person name="Tashiro H."/>
            <person name="Tanigami A."/>
            <person name="Fujiwara T."/>
            <person name="Ono T."/>
            <person name="Yamada K."/>
            <person name="Fujii Y."/>
            <person name="Ozaki K."/>
            <person name="Hirao M."/>
            <person name="Ohmori Y."/>
            <person name="Kawabata A."/>
            <person name="Hikiji T."/>
            <person name="Kobatake N."/>
            <person name="Inagaki H."/>
            <person name="Ikema Y."/>
            <person name="Okamoto S."/>
            <person name="Okitani R."/>
            <person name="Kawakami T."/>
            <person name="Noguchi S."/>
            <person name="Itoh T."/>
            <person name="Shigeta K."/>
            <person name="Senba T."/>
            <person name="Matsumura K."/>
            <person name="Nakajima Y."/>
            <person name="Mizuno T."/>
            <person name="Morinaga M."/>
            <person name="Sasaki M."/>
            <person name="Togashi T."/>
            <person name="Oyama M."/>
            <person name="Hata H."/>
            <person name="Watanabe M."/>
            <person name="Komatsu T."/>
            <person name="Mizushima-Sugano J."/>
            <person name="Satoh T."/>
            <person name="Shirai Y."/>
            <person name="Takahashi Y."/>
            <person name="Nakagawa K."/>
            <person name="Okumura K."/>
            <person name="Nagase T."/>
            <person name="Nomura N."/>
            <person name="Kikuchi H."/>
            <person name="Masuho Y."/>
            <person name="Yamashita R."/>
            <person name="Nakai K."/>
            <person name="Yada T."/>
            <person name="Nakamura Y."/>
            <person name="Ohara O."/>
            <person name="Isogai T."/>
            <person name="Sugano S."/>
        </authorList>
    </citation>
    <scope>NUCLEOTIDE SEQUENCE [LARGE SCALE MRNA] (ISOFORM 1)</scope>
</reference>
<reference key="2">
    <citation type="journal article" date="2004" name="Nature">
        <title>DNA sequence and analysis of human chromosome 9.</title>
        <authorList>
            <person name="Humphray S.J."/>
            <person name="Oliver K."/>
            <person name="Hunt A.R."/>
            <person name="Plumb R.W."/>
            <person name="Loveland J.E."/>
            <person name="Howe K.L."/>
            <person name="Andrews T.D."/>
            <person name="Searle S."/>
            <person name="Hunt S.E."/>
            <person name="Scott C.E."/>
            <person name="Jones M.C."/>
            <person name="Ainscough R."/>
            <person name="Almeida J.P."/>
            <person name="Ambrose K.D."/>
            <person name="Ashwell R.I.S."/>
            <person name="Babbage A.K."/>
            <person name="Babbage S."/>
            <person name="Bagguley C.L."/>
            <person name="Bailey J."/>
            <person name="Banerjee R."/>
            <person name="Barker D.J."/>
            <person name="Barlow K.F."/>
            <person name="Bates K."/>
            <person name="Beasley H."/>
            <person name="Beasley O."/>
            <person name="Bird C.P."/>
            <person name="Bray-Allen S."/>
            <person name="Brown A.J."/>
            <person name="Brown J.Y."/>
            <person name="Burford D."/>
            <person name="Burrill W."/>
            <person name="Burton J."/>
            <person name="Carder C."/>
            <person name="Carter N.P."/>
            <person name="Chapman J.C."/>
            <person name="Chen Y."/>
            <person name="Clarke G."/>
            <person name="Clark S.Y."/>
            <person name="Clee C.M."/>
            <person name="Clegg S."/>
            <person name="Collier R.E."/>
            <person name="Corby N."/>
            <person name="Crosier M."/>
            <person name="Cummings A.T."/>
            <person name="Davies J."/>
            <person name="Dhami P."/>
            <person name="Dunn M."/>
            <person name="Dutta I."/>
            <person name="Dyer L.W."/>
            <person name="Earthrowl M.E."/>
            <person name="Faulkner L."/>
            <person name="Fleming C.J."/>
            <person name="Frankish A."/>
            <person name="Frankland J.A."/>
            <person name="French L."/>
            <person name="Fricker D.G."/>
            <person name="Garner P."/>
            <person name="Garnett J."/>
            <person name="Ghori J."/>
            <person name="Gilbert J.G.R."/>
            <person name="Glison C."/>
            <person name="Grafham D.V."/>
            <person name="Gribble S."/>
            <person name="Griffiths C."/>
            <person name="Griffiths-Jones S."/>
            <person name="Grocock R."/>
            <person name="Guy J."/>
            <person name="Hall R.E."/>
            <person name="Hammond S."/>
            <person name="Harley J.L."/>
            <person name="Harrison E.S.I."/>
            <person name="Hart E.A."/>
            <person name="Heath P.D."/>
            <person name="Henderson C.D."/>
            <person name="Hopkins B.L."/>
            <person name="Howard P.J."/>
            <person name="Howden P.J."/>
            <person name="Huckle E."/>
            <person name="Johnson C."/>
            <person name="Johnson D."/>
            <person name="Joy A.A."/>
            <person name="Kay M."/>
            <person name="Keenan S."/>
            <person name="Kershaw J.K."/>
            <person name="Kimberley A.M."/>
            <person name="King A."/>
            <person name="Knights A."/>
            <person name="Laird G.K."/>
            <person name="Langford C."/>
            <person name="Lawlor S."/>
            <person name="Leongamornlert D.A."/>
            <person name="Leversha M."/>
            <person name="Lloyd C."/>
            <person name="Lloyd D.M."/>
            <person name="Lovell J."/>
            <person name="Martin S."/>
            <person name="Mashreghi-Mohammadi M."/>
            <person name="Matthews L."/>
            <person name="McLaren S."/>
            <person name="McLay K.E."/>
            <person name="McMurray A."/>
            <person name="Milne S."/>
            <person name="Nickerson T."/>
            <person name="Nisbett J."/>
            <person name="Nordsiek G."/>
            <person name="Pearce A.V."/>
            <person name="Peck A.I."/>
            <person name="Porter K.M."/>
            <person name="Pandian R."/>
            <person name="Pelan S."/>
            <person name="Phillimore B."/>
            <person name="Povey S."/>
            <person name="Ramsey Y."/>
            <person name="Rand V."/>
            <person name="Scharfe M."/>
            <person name="Sehra H.K."/>
            <person name="Shownkeen R."/>
            <person name="Sims S.K."/>
            <person name="Skuce C.D."/>
            <person name="Smith M."/>
            <person name="Steward C.A."/>
            <person name="Swarbreck D."/>
            <person name="Sycamore N."/>
            <person name="Tester J."/>
            <person name="Thorpe A."/>
            <person name="Tracey A."/>
            <person name="Tromans A."/>
            <person name="Thomas D.W."/>
            <person name="Wall M."/>
            <person name="Wallis J.M."/>
            <person name="West A.P."/>
            <person name="Whitehead S.L."/>
            <person name="Willey D.L."/>
            <person name="Williams S.A."/>
            <person name="Wilming L."/>
            <person name="Wray P.W."/>
            <person name="Young L."/>
            <person name="Ashurst J.L."/>
            <person name="Coulson A."/>
            <person name="Blocker H."/>
            <person name="Durbin R.M."/>
            <person name="Sulston J.E."/>
            <person name="Hubbard T."/>
            <person name="Jackson M.J."/>
            <person name="Bentley D.R."/>
            <person name="Beck S."/>
            <person name="Rogers J."/>
            <person name="Dunham I."/>
        </authorList>
    </citation>
    <scope>NUCLEOTIDE SEQUENCE [LARGE SCALE GENOMIC DNA]</scope>
</reference>
<reference key="3">
    <citation type="submission" date="2005-07" db="EMBL/GenBank/DDBJ databases">
        <authorList>
            <person name="Mural R.J."/>
            <person name="Istrail S."/>
            <person name="Sutton G.G."/>
            <person name="Florea L."/>
            <person name="Halpern A.L."/>
            <person name="Mobarry C.M."/>
            <person name="Lippert R."/>
            <person name="Walenz B."/>
            <person name="Shatkay H."/>
            <person name="Dew I."/>
            <person name="Miller J.R."/>
            <person name="Flanigan M.J."/>
            <person name="Edwards N.J."/>
            <person name="Bolanos R."/>
            <person name="Fasulo D."/>
            <person name="Halldorsson B.V."/>
            <person name="Hannenhalli S."/>
            <person name="Turner R."/>
            <person name="Yooseph S."/>
            <person name="Lu F."/>
            <person name="Nusskern D.R."/>
            <person name="Shue B.C."/>
            <person name="Zheng X.H."/>
            <person name="Zhong F."/>
            <person name="Delcher A.L."/>
            <person name="Huson D.H."/>
            <person name="Kravitz S.A."/>
            <person name="Mouchard L."/>
            <person name="Reinert K."/>
            <person name="Remington K.A."/>
            <person name="Clark A.G."/>
            <person name="Waterman M.S."/>
            <person name="Eichler E.E."/>
            <person name="Adams M.D."/>
            <person name="Hunkapiller M.W."/>
            <person name="Myers E.W."/>
            <person name="Venter J.C."/>
        </authorList>
    </citation>
    <scope>NUCLEOTIDE SEQUENCE [LARGE SCALE GENOMIC DNA]</scope>
</reference>
<reference key="4">
    <citation type="journal article" date="2004" name="Genome Res.">
        <title>The status, quality, and expansion of the NIH full-length cDNA project: the Mammalian Gene Collection (MGC).</title>
        <authorList>
            <consortium name="The MGC Project Team"/>
        </authorList>
    </citation>
    <scope>NUCLEOTIDE SEQUENCE [LARGE SCALE MRNA] (ISOFORMS 1 AND 2)</scope>
    <source>
        <tissue>Blood</tissue>
        <tissue>Brain</tissue>
    </source>
</reference>
<reference key="5">
    <citation type="journal article" date="2005" name="FEBS Lett.">
        <title>ASB proteins interact with cullin5 and Rbx2 to form E3 ubiquitin ligase complexes.</title>
        <authorList>
            <person name="Kohroki J."/>
            <person name="Nishiyama T."/>
            <person name="Nakamura T."/>
            <person name="Masuho Y."/>
        </authorList>
    </citation>
    <scope>FUNCTION AS AN E3 UBIQUITIN-PROTEIN LIGASE</scope>
    <scope>INTERACTION WITH CUL5 AND RNF7</scope>
</reference>
<reference key="6">
    <citation type="journal article" date="2021" name="Front. Cell Dev. Biol.">
        <title>CUL5-ASB6 Complex Promotes p62/SQSTM1 Ubiquitination and Degradation to Regulate Cell Proliferation and Autophagy.</title>
        <authorList>
            <person name="Gong L."/>
            <person name="Wang K."/>
            <person name="Wang M."/>
            <person name="Hu R."/>
            <person name="Li H."/>
            <person name="Gao D."/>
            <person name="Lin M."/>
        </authorList>
    </citation>
    <scope>FUNCTION</scope>
    <scope>INTERACTION WITH SQSTM1</scope>
</reference>
<reference key="7">
    <citation type="journal article" date="2022" name="Cell Death Dis.">
        <title>m6A-modified circFNDC3B inhibits colorectal cancer stemness and metastasis via RNF41-dependent ASB6 degradation.</title>
        <authorList>
            <person name="Zeng W."/>
            <person name="Zhu J.F."/>
            <person name="Guo J."/>
            <person name="Huang G.J."/>
            <person name="Ai L.S."/>
            <person name="Zeng Y."/>
            <person name="Liao W.J."/>
        </authorList>
    </citation>
    <scope>UBIQUITINATION BY RNF41</scope>
</reference>
<organism>
    <name type="scientific">Homo sapiens</name>
    <name type="common">Human</name>
    <dbReference type="NCBI Taxonomy" id="9606"/>
    <lineage>
        <taxon>Eukaryota</taxon>
        <taxon>Metazoa</taxon>
        <taxon>Chordata</taxon>
        <taxon>Craniata</taxon>
        <taxon>Vertebrata</taxon>
        <taxon>Euteleostomi</taxon>
        <taxon>Mammalia</taxon>
        <taxon>Eutheria</taxon>
        <taxon>Euarchontoglires</taxon>
        <taxon>Primates</taxon>
        <taxon>Haplorrhini</taxon>
        <taxon>Catarrhini</taxon>
        <taxon>Hominidae</taxon>
        <taxon>Homo</taxon>
    </lineage>
</organism>
<comment type="function">
    <text evidence="3 4">Probable substrate-recognition component of a SCF-like ECS (Elongin-Cullin-SOCS-box protein) E3 ubiquitin-protein ligase complex which mediates the ubiquitination and subsequent proteasomal degradation of target proteins. May play a role in the regulation of cell proliferation and autophagy by promoting the ubiquitination and degradation of SQSTM1 (PubMed:34164402).</text>
</comment>
<comment type="pathway">
    <text>Protein modification; protein ubiquitination.</text>
</comment>
<comment type="subunit">
    <text evidence="1 3 4">Binds APS. Identified in a complex with ELOB and ELOC (By similarity). Interacts with CUL5 and RNF7. Interacts with SQSTM1 (PubMed:34164402).</text>
</comment>
<comment type="interaction">
    <interactant intactId="EBI-6425205">
        <id>Q9NWX5</id>
    </interactant>
    <interactant intactId="EBI-724218">
        <id>P11230</id>
        <label>CHRNB1</label>
    </interactant>
    <organismsDiffer>false</organismsDiffer>
    <experiments>3</experiments>
</comment>
<comment type="interaction">
    <interactant intactId="EBI-6425205">
        <id>Q9NWX5</id>
    </interactant>
    <interactant intactId="EBI-1057139">
        <id>Q93034</id>
        <label>CUL5</label>
    </interactant>
    <organismsDiffer>false</organismsDiffer>
    <experiments>11</experiments>
</comment>
<comment type="interaction">
    <interactant intactId="EBI-6425205">
        <id>Q9NWX5</id>
    </interactant>
    <interactant intactId="EBI-724940">
        <id>Q9BVJ7</id>
        <label>DUSP23</label>
    </interactant>
    <organismsDiffer>false</organismsDiffer>
    <experiments>3</experiments>
</comment>
<comment type="interaction">
    <interactant intactId="EBI-6425205">
        <id>Q9NWX5</id>
    </interactant>
    <interactant intactId="EBI-10175124">
        <id>Q8IZU0</id>
        <label>FAM9B</label>
    </interactant>
    <organismsDiffer>false</organismsDiffer>
    <experiments>3</experiments>
</comment>
<comment type="interaction">
    <interactant intactId="EBI-6425205">
        <id>Q9NWX5</id>
    </interactant>
    <interactant intactId="EBI-3893317">
        <id>P09067</id>
        <label>HOXB5</label>
    </interactant>
    <organismsDiffer>false</organismsDiffer>
    <experiments>3</experiments>
</comment>
<comment type="interaction">
    <interactant intactId="EBI-6425205">
        <id>Q9NWX5</id>
    </interactant>
    <interactant intactId="EBI-2686809">
        <id>Q96JM7</id>
        <label>L3MBTL3</label>
    </interactant>
    <organismsDiffer>false</organismsDiffer>
    <experiments>3</experiments>
</comment>
<comment type="interaction">
    <interactant intactId="EBI-6425205">
        <id>Q9NWX5</id>
    </interactant>
    <interactant intactId="EBI-1757866">
        <id>P00540</id>
        <label>MOS</label>
    </interactant>
    <organismsDiffer>false</organismsDiffer>
    <experiments>3</experiments>
</comment>
<comment type="interaction">
    <interactant intactId="EBI-6425205">
        <id>Q9NWX5</id>
    </interactant>
    <interactant intactId="EBI-295301">
        <id>P24928</id>
        <label>POLR2A</label>
    </interactant>
    <organismsDiffer>false</organismsDiffer>
    <experiments>6</experiments>
</comment>
<comment type="interaction">
    <interactant intactId="EBI-6425205">
        <id>Q9NWX5</id>
    </interactant>
    <interactant intactId="EBI-2130266">
        <id>Q9H4P4</id>
        <label>RNF41</label>
    </interactant>
    <organismsDiffer>false</organismsDiffer>
    <experiments>9</experiments>
</comment>
<comment type="interaction">
    <interactant intactId="EBI-6425205">
        <id>Q9NWX5</id>
    </interactant>
    <interactant intactId="EBI-398632">
        <id>Q9UBF6</id>
        <label>RNF7</label>
    </interactant>
    <organismsDiffer>false</organismsDiffer>
    <experiments>4</experiments>
</comment>
<comment type="interaction">
    <interactant intactId="EBI-6425205">
        <id>Q9NWX5</id>
    </interactant>
    <interactant intactId="EBI-19952306">
        <id>O14492-2</id>
        <label>SH2B2</label>
    </interactant>
    <organismsDiffer>false</organismsDiffer>
    <experiments>6</experiments>
</comment>
<comment type="interaction">
    <interactant intactId="EBI-6425205">
        <id>Q9NWX5</id>
    </interactant>
    <interactant intactId="EBI-1045099">
        <id>Q9BW92</id>
        <label>TARS2</label>
    </interactant>
    <organismsDiffer>false</organismsDiffer>
    <experiments>3</experiments>
</comment>
<comment type="interaction">
    <interactant intactId="EBI-6425205">
        <id>Q9NWX5</id>
    </interactant>
    <interactant intactId="EBI-954089">
        <id>O15273</id>
        <label>TCAP</label>
    </interactant>
    <organismsDiffer>false</organismsDiffer>
    <experiments>3</experiments>
</comment>
<comment type="interaction">
    <interactant intactId="EBI-6425205">
        <id>Q9NWX5</id>
    </interactant>
    <interactant intactId="EBI-12287587">
        <id>B2RXF5</id>
        <label>ZBTB42</label>
    </interactant>
    <organismsDiffer>false</organismsDiffer>
    <experiments>3</experiments>
</comment>
<comment type="interaction">
    <interactant intactId="EBI-6425205">
        <id>Q9NWX5</id>
    </interactant>
    <interactant intactId="EBI-6427977">
        <id>Q96SQ5</id>
        <label>ZNF587</label>
    </interactant>
    <organismsDiffer>false</organismsDiffer>
    <experiments>3</experiments>
</comment>
<comment type="interaction">
    <interactant intactId="EBI-6425205">
        <id>Q9NWX5</id>
    </interactant>
    <interactant intactId="EBI-625509">
        <id>Q8N720</id>
        <label>ZNF655</label>
    </interactant>
    <organismsDiffer>false</organismsDiffer>
    <experiments>3</experiments>
</comment>
<comment type="interaction">
    <interactant intactId="EBI-25838672">
        <id>Q9NWX5-2</id>
    </interactant>
    <interactant intactId="EBI-10968534">
        <id>P50570-2</id>
        <label>DNM2</label>
    </interactant>
    <organismsDiffer>false</organismsDiffer>
    <experiments>3</experiments>
</comment>
<comment type="interaction">
    <interactant intactId="EBI-25838672">
        <id>Q9NWX5-2</id>
    </interactant>
    <interactant intactId="EBI-2800203">
        <id>O14773</id>
        <label>TPP1</label>
    </interactant>
    <organismsDiffer>false</organismsDiffer>
    <experiments>3</experiments>
</comment>
<comment type="subcellular location">
    <subcellularLocation>
        <location evidence="1">Cytoplasm</location>
    </subcellularLocation>
</comment>
<comment type="alternative products">
    <event type="alternative splicing"/>
    <isoform>
        <id>Q9NWX5-1</id>
        <name>1</name>
        <sequence type="displayed"/>
    </isoform>
    <isoform>
        <id>Q9NWX5-2</id>
        <name>2</name>
        <sequence type="described" ref="VSP_042006"/>
    </isoform>
</comment>
<comment type="domain">
    <text evidence="1">The SOCS box domain mediates the interaction with the Elongin BC complex, an adapter module in different E3 ubiquitin-protein ligase complexes.</text>
</comment>
<comment type="PTM">
    <text evidence="5">Ubiquitinated by RNF41; leading to proteasomal degradation.</text>
</comment>
<comment type="similarity">
    <text evidence="7">Belongs to the ankyrin SOCS box (ASB) family.</text>
</comment>
<sequence length="421" mass="47136">MPFLHGFRRIIFEYQPLVDAILGSLGIQDPERQESLDRPSYVASEESRILVLTELLERKAHSPFYQEGVSNALLKMAELGLTRAADVLLRHGANLNFEDPVTYYTALHIAVLRNQPDMVELLVHHGADVNRRDRIHESSPLDLASEEPERLPCLQRLLDLGADVNAADKHGKTALLHALASSDGVQIHNTENIRLLLEGGADVKATTKDGDTVFTCIIFLLGETVGGDKEEAQMINRFCFQVTRLLLAHGADPSECPAHESLTHICLKSFKLHFPLLRFLLESGAAYNCSLHGASCWSGFHIIFERLCSHPGCTEDESHADLLRKAETVLDLMVTNSQKLQLPENFDIHPVGSLAEKIQALHFSLRQLESYPPPLKHLCRVAIRLYLQPWPVDVKVKALPLPDRLKWYLLSEHSGSVEDDI</sequence>
<gene>
    <name type="primary">ASB6</name>
</gene>
<dbReference type="EMBL" id="AK000555">
    <property type="protein sequence ID" value="BAA91250.1"/>
    <property type="molecule type" value="mRNA"/>
</dbReference>
<dbReference type="EMBL" id="AK023004">
    <property type="protein sequence ID" value="BAB14355.1"/>
    <property type="molecule type" value="mRNA"/>
</dbReference>
<dbReference type="EMBL" id="AL590369">
    <property type="status" value="NOT_ANNOTATED_CDS"/>
    <property type="molecule type" value="Genomic_DNA"/>
</dbReference>
<dbReference type="EMBL" id="CH471090">
    <property type="protein sequence ID" value="EAW87899.1"/>
    <property type="molecule type" value="Genomic_DNA"/>
</dbReference>
<dbReference type="EMBL" id="CH471090">
    <property type="protein sequence ID" value="EAW87900.1"/>
    <property type="molecule type" value="Genomic_DNA"/>
</dbReference>
<dbReference type="EMBL" id="BC001719">
    <property type="protein sequence ID" value="AAH01719.1"/>
    <property type="molecule type" value="mRNA"/>
</dbReference>
<dbReference type="EMBL" id="BC065913">
    <property type="protein sequence ID" value="AAH65913.1"/>
    <property type="molecule type" value="mRNA"/>
</dbReference>
<dbReference type="CCDS" id="CCDS6924.1">
    <molecule id="Q9NWX5-1"/>
</dbReference>
<dbReference type="CCDS" id="CCDS6925.1">
    <molecule id="Q9NWX5-2"/>
</dbReference>
<dbReference type="RefSeq" id="NP_001189332.1">
    <property type="nucleotide sequence ID" value="NM_001202403.1"/>
</dbReference>
<dbReference type="RefSeq" id="NP_060343.1">
    <molecule id="Q9NWX5-1"/>
    <property type="nucleotide sequence ID" value="NM_017873.4"/>
</dbReference>
<dbReference type="RefSeq" id="NP_821066.1">
    <molecule id="Q9NWX5-2"/>
    <property type="nucleotide sequence ID" value="NM_177999.3"/>
</dbReference>
<dbReference type="SMR" id="Q9NWX5"/>
<dbReference type="BioGRID" id="126612">
    <property type="interactions" value="113"/>
</dbReference>
<dbReference type="CORUM" id="Q9NWX5"/>
<dbReference type="FunCoup" id="Q9NWX5">
    <property type="interactions" value="1696"/>
</dbReference>
<dbReference type="IntAct" id="Q9NWX5">
    <property type="interactions" value="76"/>
</dbReference>
<dbReference type="MINT" id="Q9NWX5"/>
<dbReference type="STRING" id="9606.ENSP00000277458"/>
<dbReference type="iPTMnet" id="Q9NWX5"/>
<dbReference type="PhosphoSitePlus" id="Q9NWX5"/>
<dbReference type="BioMuta" id="ASB6"/>
<dbReference type="DMDM" id="41688801"/>
<dbReference type="jPOST" id="Q9NWX5"/>
<dbReference type="MassIVE" id="Q9NWX5"/>
<dbReference type="PaxDb" id="9606-ENSP00000277458"/>
<dbReference type="PeptideAtlas" id="Q9NWX5"/>
<dbReference type="ProteomicsDB" id="82996">
    <molecule id="Q9NWX5-1"/>
</dbReference>
<dbReference type="ProteomicsDB" id="82997">
    <molecule id="Q9NWX5-2"/>
</dbReference>
<dbReference type="Pumba" id="Q9NWX5"/>
<dbReference type="Antibodypedia" id="1154">
    <property type="antibodies" value="79 antibodies from 20 providers"/>
</dbReference>
<dbReference type="DNASU" id="140459"/>
<dbReference type="Ensembl" id="ENST00000277458.5">
    <molecule id="Q9NWX5-1"/>
    <property type="protein sequence ID" value="ENSP00000277458.4"/>
    <property type="gene ID" value="ENSG00000148331.12"/>
</dbReference>
<dbReference type="Ensembl" id="ENST00000277459.8">
    <molecule id="Q9NWX5-2"/>
    <property type="protein sequence ID" value="ENSP00000277459.4"/>
    <property type="gene ID" value="ENSG00000148331.12"/>
</dbReference>
<dbReference type="GeneID" id="140459"/>
<dbReference type="KEGG" id="hsa:140459"/>
<dbReference type="MANE-Select" id="ENST00000277458.5">
    <property type="protein sequence ID" value="ENSP00000277458.4"/>
    <property type="RefSeq nucleotide sequence ID" value="NM_017873.4"/>
    <property type="RefSeq protein sequence ID" value="NP_060343.1"/>
</dbReference>
<dbReference type="UCSC" id="uc004byf.3">
    <molecule id="Q9NWX5-1"/>
    <property type="organism name" value="human"/>
</dbReference>
<dbReference type="AGR" id="HGNC:17181"/>
<dbReference type="CTD" id="140459"/>
<dbReference type="DisGeNET" id="140459"/>
<dbReference type="GeneCards" id="ASB6"/>
<dbReference type="HGNC" id="HGNC:17181">
    <property type="gene designation" value="ASB6"/>
</dbReference>
<dbReference type="HPA" id="ENSG00000148331">
    <property type="expression patterns" value="Low tissue specificity"/>
</dbReference>
<dbReference type="MIM" id="615051">
    <property type="type" value="gene"/>
</dbReference>
<dbReference type="neXtProt" id="NX_Q9NWX5"/>
<dbReference type="OpenTargets" id="ENSG00000148331"/>
<dbReference type="PharmGKB" id="PA25034"/>
<dbReference type="VEuPathDB" id="HostDB:ENSG00000148331"/>
<dbReference type="eggNOG" id="KOG0504">
    <property type="taxonomic scope" value="Eukaryota"/>
</dbReference>
<dbReference type="GeneTree" id="ENSGT00390000006784"/>
<dbReference type="HOGENOM" id="CLU_1383762_0_0_1"/>
<dbReference type="InParanoid" id="Q9NWX5"/>
<dbReference type="OMA" id="HLCRVHI"/>
<dbReference type="OrthoDB" id="194358at2759"/>
<dbReference type="PAN-GO" id="Q9NWX5">
    <property type="GO annotations" value="2 GO annotations based on evolutionary models"/>
</dbReference>
<dbReference type="PhylomeDB" id="Q9NWX5"/>
<dbReference type="TreeFam" id="TF330837"/>
<dbReference type="PathwayCommons" id="Q9NWX5"/>
<dbReference type="Reactome" id="R-HSA-8951664">
    <property type="pathway name" value="Neddylation"/>
</dbReference>
<dbReference type="Reactome" id="R-HSA-983168">
    <property type="pathway name" value="Antigen processing: Ubiquitination &amp; Proteasome degradation"/>
</dbReference>
<dbReference type="SignaLink" id="Q9NWX5"/>
<dbReference type="UniPathway" id="UPA00143"/>
<dbReference type="BioGRID-ORCS" id="140459">
    <property type="hits" value="50 hits in 1193 CRISPR screens"/>
</dbReference>
<dbReference type="ChiTaRS" id="ASB6">
    <property type="organism name" value="human"/>
</dbReference>
<dbReference type="GeneWiki" id="ASB6"/>
<dbReference type="GenomeRNAi" id="140459"/>
<dbReference type="Pharos" id="Q9NWX5">
    <property type="development level" value="Tdark"/>
</dbReference>
<dbReference type="PRO" id="PR:Q9NWX5"/>
<dbReference type="Proteomes" id="UP000005640">
    <property type="component" value="Chromosome 9"/>
</dbReference>
<dbReference type="RNAct" id="Q9NWX5">
    <property type="molecule type" value="protein"/>
</dbReference>
<dbReference type="Bgee" id="ENSG00000148331">
    <property type="expression patterns" value="Expressed in granulocyte and 167 other cell types or tissues"/>
</dbReference>
<dbReference type="ExpressionAtlas" id="Q9NWX5">
    <property type="expression patterns" value="baseline and differential"/>
</dbReference>
<dbReference type="GO" id="GO:0005829">
    <property type="term" value="C:cytosol"/>
    <property type="evidence" value="ECO:0000304"/>
    <property type="project" value="Reactome"/>
</dbReference>
<dbReference type="GO" id="GO:0035556">
    <property type="term" value="P:intracellular signal transduction"/>
    <property type="evidence" value="ECO:0007669"/>
    <property type="project" value="InterPro"/>
</dbReference>
<dbReference type="GO" id="GO:0016567">
    <property type="term" value="P:protein ubiquitination"/>
    <property type="evidence" value="ECO:0007669"/>
    <property type="project" value="UniProtKB-UniPathway"/>
</dbReference>
<dbReference type="CDD" id="cd03725">
    <property type="entry name" value="SOCS_ASB6"/>
    <property type="match status" value="1"/>
</dbReference>
<dbReference type="FunFam" id="1.10.750.20:FF:000001">
    <property type="entry name" value="Ankyrin repeat and SOCS box containing 1"/>
    <property type="match status" value="1"/>
</dbReference>
<dbReference type="FunFam" id="1.25.40.20:FF:000362">
    <property type="entry name" value="Ankyrin repeat and SOCS box containing 6"/>
    <property type="match status" value="1"/>
</dbReference>
<dbReference type="Gene3D" id="1.25.40.20">
    <property type="entry name" value="Ankyrin repeat-containing domain"/>
    <property type="match status" value="1"/>
</dbReference>
<dbReference type="Gene3D" id="1.10.750.20">
    <property type="entry name" value="SOCS box"/>
    <property type="match status" value="1"/>
</dbReference>
<dbReference type="InterPro" id="IPR002110">
    <property type="entry name" value="Ankyrin_rpt"/>
</dbReference>
<dbReference type="InterPro" id="IPR036770">
    <property type="entry name" value="Ankyrin_rpt-contain_sf"/>
</dbReference>
<dbReference type="InterPro" id="IPR037327">
    <property type="entry name" value="ASB6_SOCS"/>
</dbReference>
<dbReference type="InterPro" id="IPR001496">
    <property type="entry name" value="SOCS_box"/>
</dbReference>
<dbReference type="InterPro" id="IPR036036">
    <property type="entry name" value="SOCS_box-like_dom_sf"/>
</dbReference>
<dbReference type="PANTHER" id="PTHR24132">
    <property type="entry name" value="ANKYRIN REPEAT AND SOCS BOX PROTEIN 6"/>
    <property type="match status" value="1"/>
</dbReference>
<dbReference type="PANTHER" id="PTHR24132:SF24">
    <property type="entry name" value="ANKYRIN REPEAT AND SOCS BOX PROTEIN 6"/>
    <property type="match status" value="1"/>
</dbReference>
<dbReference type="Pfam" id="PF12796">
    <property type="entry name" value="Ank_2"/>
    <property type="match status" value="1"/>
</dbReference>
<dbReference type="Pfam" id="PF13637">
    <property type="entry name" value="Ank_4"/>
    <property type="match status" value="1"/>
</dbReference>
<dbReference type="Pfam" id="PF07525">
    <property type="entry name" value="SOCS_box"/>
    <property type="match status" value="1"/>
</dbReference>
<dbReference type="SMART" id="SM00248">
    <property type="entry name" value="ANK"/>
    <property type="match status" value="5"/>
</dbReference>
<dbReference type="SMART" id="SM00253">
    <property type="entry name" value="SOCS"/>
    <property type="match status" value="1"/>
</dbReference>
<dbReference type="SMART" id="SM00969">
    <property type="entry name" value="SOCS_box"/>
    <property type="match status" value="1"/>
</dbReference>
<dbReference type="SUPFAM" id="SSF48403">
    <property type="entry name" value="Ankyrin repeat"/>
    <property type="match status" value="1"/>
</dbReference>
<dbReference type="SUPFAM" id="SSF158235">
    <property type="entry name" value="SOCS box-like"/>
    <property type="match status" value="1"/>
</dbReference>
<dbReference type="PROSITE" id="PS50297">
    <property type="entry name" value="ANK_REP_REGION"/>
    <property type="match status" value="1"/>
</dbReference>
<dbReference type="PROSITE" id="PS50088">
    <property type="entry name" value="ANK_REPEAT"/>
    <property type="match status" value="2"/>
</dbReference>
<dbReference type="PROSITE" id="PS50225">
    <property type="entry name" value="SOCS"/>
    <property type="match status" value="1"/>
</dbReference>
<protein>
    <recommendedName>
        <fullName>Ankyrin repeat and SOCS box protein 6</fullName>
        <shortName>ASB-6</shortName>
    </recommendedName>
</protein>